<feature type="chain" id="PRO_0000370977" description="ATP synthase subunit delta">
    <location>
        <begin position="1"/>
        <end position="177"/>
    </location>
</feature>
<evidence type="ECO:0000255" key="1">
    <source>
        <dbReference type="HAMAP-Rule" id="MF_01416"/>
    </source>
</evidence>
<reference key="1">
    <citation type="journal article" date="2011" name="Proc. Natl. Acad. Sci. U.S.A.">
        <title>Genomic anatomy of Escherichia coli O157:H7 outbreaks.</title>
        <authorList>
            <person name="Eppinger M."/>
            <person name="Mammel M.K."/>
            <person name="Leclerc J.E."/>
            <person name="Ravel J."/>
            <person name="Cebula T.A."/>
        </authorList>
    </citation>
    <scope>NUCLEOTIDE SEQUENCE [LARGE SCALE GENOMIC DNA]</scope>
    <source>
        <strain>EC4115 / EHEC</strain>
    </source>
</reference>
<comment type="function">
    <text evidence="1">F(1)F(0) ATP synthase produces ATP from ADP in the presence of a proton or sodium gradient. F-type ATPases consist of two structural domains, F(1) containing the extramembraneous catalytic core and F(0) containing the membrane proton channel, linked together by a central stalk and a peripheral stalk. During catalysis, ATP synthesis in the catalytic domain of F(1) is coupled via a rotary mechanism of the central stalk subunits to proton translocation.</text>
</comment>
<comment type="function">
    <text evidence="1">This protein is part of the stalk that links CF(0) to CF(1). It either transmits conformational changes from CF(0) to CF(1) or is implicated in proton conduction.</text>
</comment>
<comment type="subunit">
    <text evidence="1">F-type ATPases have 2 components, F(1) - the catalytic core - and F(0) - the membrane proton channel. F(1) has five subunits: alpha(3), beta(3), gamma(1), delta(1), epsilon(1). F(0) has three main subunits: a(1), b(2) and c(10-14). The alpha and beta chains form an alternating ring which encloses part of the gamma chain. F(1) is attached to F(0) by a central stalk formed by the gamma and epsilon chains, while a peripheral stalk is formed by the delta and b chains.</text>
</comment>
<comment type="subcellular location">
    <subcellularLocation>
        <location evidence="1">Cell inner membrane</location>
        <topology evidence="1">Peripheral membrane protein</topology>
    </subcellularLocation>
</comment>
<comment type="similarity">
    <text evidence="1">Belongs to the ATPase delta chain family.</text>
</comment>
<proteinExistence type="inferred from homology"/>
<gene>
    <name evidence="1" type="primary">atpH</name>
    <name type="ordered locus">ECH74115_5171</name>
</gene>
<keyword id="KW-0066">ATP synthesis</keyword>
<keyword id="KW-0997">Cell inner membrane</keyword>
<keyword id="KW-1003">Cell membrane</keyword>
<keyword id="KW-0139">CF(1)</keyword>
<keyword id="KW-0375">Hydrogen ion transport</keyword>
<keyword id="KW-0406">Ion transport</keyword>
<keyword id="KW-0472">Membrane</keyword>
<keyword id="KW-0813">Transport</keyword>
<accession>B5YXD9</accession>
<protein>
    <recommendedName>
        <fullName evidence="1">ATP synthase subunit delta</fullName>
    </recommendedName>
    <alternativeName>
        <fullName evidence="1">ATP synthase F(1) sector subunit delta</fullName>
    </alternativeName>
    <alternativeName>
        <fullName evidence="1">F-type ATPase subunit delta</fullName>
        <shortName evidence="1">F-ATPase subunit delta</shortName>
    </alternativeName>
</protein>
<dbReference type="EMBL" id="CP001164">
    <property type="protein sequence ID" value="ACI35464.1"/>
    <property type="molecule type" value="Genomic_DNA"/>
</dbReference>
<dbReference type="RefSeq" id="WP_001288587.1">
    <property type="nucleotide sequence ID" value="NC_011353.1"/>
</dbReference>
<dbReference type="SMR" id="B5YXD9"/>
<dbReference type="GeneID" id="93778232"/>
<dbReference type="KEGG" id="ecf:ECH74115_5171"/>
<dbReference type="HOGENOM" id="CLU_085114_3_0_6"/>
<dbReference type="GO" id="GO:0005886">
    <property type="term" value="C:plasma membrane"/>
    <property type="evidence" value="ECO:0007669"/>
    <property type="project" value="UniProtKB-SubCell"/>
</dbReference>
<dbReference type="GO" id="GO:0045259">
    <property type="term" value="C:proton-transporting ATP synthase complex"/>
    <property type="evidence" value="ECO:0007669"/>
    <property type="project" value="UniProtKB-KW"/>
</dbReference>
<dbReference type="GO" id="GO:0046933">
    <property type="term" value="F:proton-transporting ATP synthase activity, rotational mechanism"/>
    <property type="evidence" value="ECO:0007669"/>
    <property type="project" value="UniProtKB-UniRule"/>
</dbReference>
<dbReference type="FunFam" id="1.10.520.20:FF:000001">
    <property type="entry name" value="ATP synthase subunit delta"/>
    <property type="match status" value="1"/>
</dbReference>
<dbReference type="Gene3D" id="1.10.520.20">
    <property type="entry name" value="N-terminal domain of the delta subunit of the F1F0-ATP synthase"/>
    <property type="match status" value="1"/>
</dbReference>
<dbReference type="HAMAP" id="MF_01416">
    <property type="entry name" value="ATP_synth_delta_bact"/>
    <property type="match status" value="1"/>
</dbReference>
<dbReference type="InterPro" id="IPR026015">
    <property type="entry name" value="ATP_synth_OSCP/delta_N_sf"/>
</dbReference>
<dbReference type="InterPro" id="IPR020781">
    <property type="entry name" value="ATPase_OSCP/d_CS"/>
</dbReference>
<dbReference type="InterPro" id="IPR000711">
    <property type="entry name" value="ATPase_OSCP/dsu"/>
</dbReference>
<dbReference type="NCBIfam" id="TIGR01145">
    <property type="entry name" value="ATP_synt_delta"/>
    <property type="match status" value="1"/>
</dbReference>
<dbReference type="NCBIfam" id="NF004402">
    <property type="entry name" value="PRK05758.2-2"/>
    <property type="match status" value="1"/>
</dbReference>
<dbReference type="NCBIfam" id="NF004404">
    <property type="entry name" value="PRK05758.2-5"/>
    <property type="match status" value="1"/>
</dbReference>
<dbReference type="PANTHER" id="PTHR11910">
    <property type="entry name" value="ATP SYNTHASE DELTA CHAIN"/>
    <property type="match status" value="1"/>
</dbReference>
<dbReference type="Pfam" id="PF00213">
    <property type="entry name" value="OSCP"/>
    <property type="match status" value="1"/>
</dbReference>
<dbReference type="PRINTS" id="PR00125">
    <property type="entry name" value="ATPASEDELTA"/>
</dbReference>
<dbReference type="SUPFAM" id="SSF47928">
    <property type="entry name" value="N-terminal domain of the delta subunit of the F1F0-ATP synthase"/>
    <property type="match status" value="1"/>
</dbReference>
<dbReference type="PROSITE" id="PS00389">
    <property type="entry name" value="ATPASE_DELTA"/>
    <property type="match status" value="1"/>
</dbReference>
<sequence length="177" mass="19332">MSEFITVARPYAKAAFDFAVEHQSVERWQDMLAFAAEVTKNEQMAELLSGALAPETLAESFIAVCGEQLDENGQNLIRVMAENGRLNALPDVLEQFIHLRAVSEATAEVDVISAAALSEQQLAKISAAMEKRLSRKVKLNCKIDKSVMAGVIIRAGDMVIDGSVRGRLERLADVLQS</sequence>
<name>ATPD_ECO5E</name>
<organism>
    <name type="scientific">Escherichia coli O157:H7 (strain EC4115 / EHEC)</name>
    <dbReference type="NCBI Taxonomy" id="444450"/>
    <lineage>
        <taxon>Bacteria</taxon>
        <taxon>Pseudomonadati</taxon>
        <taxon>Pseudomonadota</taxon>
        <taxon>Gammaproteobacteria</taxon>
        <taxon>Enterobacterales</taxon>
        <taxon>Enterobacteriaceae</taxon>
        <taxon>Escherichia</taxon>
    </lineage>
</organism>